<keyword id="KW-0053">Apoptosis</keyword>
<keyword id="KW-0121">Carboxypeptidase</keyword>
<keyword id="KW-0325">Glycoprotein</keyword>
<keyword id="KW-0333">Golgi apparatus</keyword>
<keyword id="KW-0378">Hydrolase</keyword>
<keyword id="KW-0472">Membrane</keyword>
<keyword id="KW-0645">Protease</keyword>
<keyword id="KW-1185">Reference proteome</keyword>
<keyword id="KW-0732">Signal</keyword>
<keyword id="KW-0812">Transmembrane</keyword>
<keyword id="KW-1133">Transmembrane helix</keyword>
<accession>Q0CCR9</accession>
<sequence length="625" mass="70454">MVSLSLRGARRTAKDAASLPFLSWTLSLLALNPLLVSAKSAADYYVRSLPGAPEGPLLKMHAGHIEVDPENHGNLFFWHFQNRHIANRQRTVIWLNGGPGCSSMDGALMEVGPYRLKDNSTLEYNEGSWDEFGNLLFVDQPVGTGFSYVNGNQYLHEMDEMAAHFITFLENWFDIFPEYERDDIYIAGESFAGQHIPYIAKAIQERNEKAQMKPKWSLRGLLIGNGWISPKDQYPSYLTFAYEEGLITKDSRTAKNLEVLQSVCESRLEAGKNKIHLDDCEKVLSEMLTKTMDVSKNECINSYDIRLRDEAPACGMNWPPELTHMNYYLRQPELISALNINPEKKSGWMECSNAVSSTFRTQKSVPSVQLLPGLIESGIPILLFSGDKDLICNHVGTEELINNMKWNGGTGFETSPGVWAPRHDWTFEGEPAGIYQYARNLTYVLFYNASHMVPYDLPRQSRDMLDRFMQVDIASIGGSPADSRIDGEKLPQTSVGGHPNSTAAEEQEKKKMKEAEWKAYAKSGEAVLVVVIIGVIVWGFFIWRSRRHHRGYRSVYNKNMSGSSVLERFHSKRSGADMEAGDFDEAELDDLHSPGLDREHYAVGDDSDDEQQHQRQGSRPEGGQS</sequence>
<proteinExistence type="inferred from homology"/>
<gene>
    <name type="primary">kex1</name>
    <name type="ORF">ATEG_08515</name>
</gene>
<protein>
    <recommendedName>
        <fullName>Pheromone-processing carboxypeptidase kex1</fullName>
        <ecNumber>3.4.16.6</ecNumber>
    </recommendedName>
    <alternativeName>
        <fullName>Carboxypeptidase D</fullName>
    </alternativeName>
</protein>
<organism>
    <name type="scientific">Aspergillus terreus (strain NIH 2624 / FGSC A1156)</name>
    <dbReference type="NCBI Taxonomy" id="341663"/>
    <lineage>
        <taxon>Eukaryota</taxon>
        <taxon>Fungi</taxon>
        <taxon>Dikarya</taxon>
        <taxon>Ascomycota</taxon>
        <taxon>Pezizomycotina</taxon>
        <taxon>Eurotiomycetes</taxon>
        <taxon>Eurotiomycetidae</taxon>
        <taxon>Eurotiales</taxon>
        <taxon>Aspergillaceae</taxon>
        <taxon>Aspergillus</taxon>
        <taxon>Aspergillus subgen. Circumdati</taxon>
    </lineage>
</organism>
<name>KEX1_ASPTN</name>
<evidence type="ECO:0000250" key="1"/>
<evidence type="ECO:0000255" key="2"/>
<evidence type="ECO:0000256" key="3">
    <source>
        <dbReference type="SAM" id="MobiDB-lite"/>
    </source>
</evidence>
<evidence type="ECO:0000305" key="4"/>
<reference key="1">
    <citation type="submission" date="2005-09" db="EMBL/GenBank/DDBJ databases">
        <title>Annotation of the Aspergillus terreus NIH2624 genome.</title>
        <authorList>
            <person name="Birren B.W."/>
            <person name="Lander E.S."/>
            <person name="Galagan J.E."/>
            <person name="Nusbaum C."/>
            <person name="Devon K."/>
            <person name="Henn M."/>
            <person name="Ma L.-J."/>
            <person name="Jaffe D.B."/>
            <person name="Butler J."/>
            <person name="Alvarez P."/>
            <person name="Gnerre S."/>
            <person name="Grabherr M."/>
            <person name="Kleber M."/>
            <person name="Mauceli E.W."/>
            <person name="Brockman W."/>
            <person name="Rounsley S."/>
            <person name="Young S.K."/>
            <person name="LaButti K."/>
            <person name="Pushparaj V."/>
            <person name="DeCaprio D."/>
            <person name="Crawford M."/>
            <person name="Koehrsen M."/>
            <person name="Engels R."/>
            <person name="Montgomery P."/>
            <person name="Pearson M."/>
            <person name="Howarth C."/>
            <person name="Larson L."/>
            <person name="Luoma S."/>
            <person name="White J."/>
            <person name="Alvarado L."/>
            <person name="Kodira C.D."/>
            <person name="Zeng Q."/>
            <person name="Oleary S."/>
            <person name="Yandava C."/>
            <person name="Denning D.W."/>
            <person name="Nierman W.C."/>
            <person name="Milne T."/>
            <person name="Madden K."/>
        </authorList>
    </citation>
    <scope>NUCLEOTIDE SEQUENCE [LARGE SCALE GENOMIC DNA]</scope>
    <source>
        <strain>NIH 2624 / FGSC A1156</strain>
    </source>
</reference>
<dbReference type="EC" id="3.4.16.6"/>
<dbReference type="EMBL" id="CH476606">
    <property type="protein sequence ID" value="EAU30647.1"/>
    <property type="molecule type" value="Genomic_DNA"/>
</dbReference>
<dbReference type="RefSeq" id="XP_001217101.1">
    <property type="nucleotide sequence ID" value="XM_001217100.1"/>
</dbReference>
<dbReference type="SMR" id="Q0CCR9"/>
<dbReference type="STRING" id="341663.Q0CCR9"/>
<dbReference type="ESTHER" id="asptn-kex1">
    <property type="family name" value="Carboxypeptidase_S10"/>
</dbReference>
<dbReference type="MEROPS" id="S10.007"/>
<dbReference type="GlyCosmos" id="Q0CCR9">
    <property type="glycosylation" value="4 sites, No reported glycans"/>
</dbReference>
<dbReference type="EnsemblFungi" id="EAU30647">
    <property type="protein sequence ID" value="EAU30647"/>
    <property type="gene ID" value="ATEG_08515"/>
</dbReference>
<dbReference type="GeneID" id="4323538"/>
<dbReference type="VEuPathDB" id="FungiDB:ATEG_08515"/>
<dbReference type="eggNOG" id="KOG1282">
    <property type="taxonomic scope" value="Eukaryota"/>
</dbReference>
<dbReference type="HOGENOM" id="CLU_008523_11_0_1"/>
<dbReference type="OMA" id="EMADQFV"/>
<dbReference type="OrthoDB" id="443318at2759"/>
<dbReference type="Proteomes" id="UP000007963">
    <property type="component" value="Unassembled WGS sequence"/>
</dbReference>
<dbReference type="GO" id="GO:0016020">
    <property type="term" value="C:membrane"/>
    <property type="evidence" value="ECO:0007669"/>
    <property type="project" value="UniProtKB-KW"/>
</dbReference>
<dbReference type="GO" id="GO:0005802">
    <property type="term" value="C:trans-Golgi network"/>
    <property type="evidence" value="ECO:0007669"/>
    <property type="project" value="TreeGrafter"/>
</dbReference>
<dbReference type="GO" id="GO:0004185">
    <property type="term" value="F:serine-type carboxypeptidase activity"/>
    <property type="evidence" value="ECO:0007669"/>
    <property type="project" value="UniProtKB-EC"/>
</dbReference>
<dbReference type="GO" id="GO:0006915">
    <property type="term" value="P:apoptotic process"/>
    <property type="evidence" value="ECO:0007669"/>
    <property type="project" value="UniProtKB-KW"/>
</dbReference>
<dbReference type="GO" id="GO:0006508">
    <property type="term" value="P:proteolysis"/>
    <property type="evidence" value="ECO:0007669"/>
    <property type="project" value="UniProtKB-KW"/>
</dbReference>
<dbReference type="FunFam" id="3.40.50.1820:FF:000121">
    <property type="entry name" value="Carboxypeptidase D"/>
    <property type="match status" value="1"/>
</dbReference>
<dbReference type="Gene3D" id="3.40.50.1820">
    <property type="entry name" value="alpha/beta hydrolase"/>
    <property type="match status" value="1"/>
</dbReference>
<dbReference type="InterPro" id="IPR029058">
    <property type="entry name" value="AB_hydrolase_fold"/>
</dbReference>
<dbReference type="InterPro" id="IPR001563">
    <property type="entry name" value="Peptidase_S10"/>
</dbReference>
<dbReference type="PANTHER" id="PTHR11802:SF190">
    <property type="entry name" value="PHEROMONE-PROCESSING CARBOXYPEPTIDASE KEX1"/>
    <property type="match status" value="1"/>
</dbReference>
<dbReference type="PANTHER" id="PTHR11802">
    <property type="entry name" value="SERINE PROTEASE FAMILY S10 SERINE CARBOXYPEPTIDASE"/>
    <property type="match status" value="1"/>
</dbReference>
<dbReference type="Pfam" id="PF00450">
    <property type="entry name" value="Peptidase_S10"/>
    <property type="match status" value="1"/>
</dbReference>
<dbReference type="PRINTS" id="PR00724">
    <property type="entry name" value="CRBOXYPTASEC"/>
</dbReference>
<dbReference type="SUPFAM" id="SSF53474">
    <property type="entry name" value="alpha/beta-Hydrolases"/>
    <property type="match status" value="1"/>
</dbReference>
<comment type="function">
    <text evidence="1">Protease with a carboxypeptidase B-like function involved in the C-terminal processing of the lysine and arginine residues from protein precursors. Promotes cell fusion and is involved in the programmed cell death (By similarity).</text>
</comment>
<comment type="catalytic activity">
    <reaction>
        <text>Preferential release of a C-terminal arginine or lysine residue.</text>
        <dbReference type="EC" id="3.4.16.6"/>
    </reaction>
</comment>
<comment type="subcellular location">
    <subcellularLocation>
        <location evidence="1">Golgi apparatus</location>
        <location evidence="1">trans-Golgi network membrane</location>
        <topology evidence="1">Single-pass type I membrane protein</topology>
    </subcellularLocation>
</comment>
<comment type="similarity">
    <text evidence="4">Belongs to the peptidase S10 family.</text>
</comment>
<feature type="signal peptide" evidence="2">
    <location>
        <begin position="1"/>
        <end position="38"/>
    </location>
</feature>
<feature type="chain" id="PRO_0000411906" description="Pheromone-processing carboxypeptidase kex1">
    <location>
        <begin position="39"/>
        <end position="625"/>
    </location>
</feature>
<feature type="topological domain" description="Lumenal" evidence="2">
    <location>
        <begin position="39"/>
        <end position="522"/>
    </location>
</feature>
<feature type="transmembrane region" description="Helical" evidence="2">
    <location>
        <begin position="523"/>
        <end position="543"/>
    </location>
</feature>
<feature type="topological domain" description="Cytoplasmic" evidence="2">
    <location>
        <begin position="544"/>
        <end position="625"/>
    </location>
</feature>
<feature type="region of interest" description="Disordered" evidence="3">
    <location>
        <begin position="479"/>
        <end position="510"/>
    </location>
</feature>
<feature type="region of interest" description="Disordered" evidence="3">
    <location>
        <begin position="588"/>
        <end position="625"/>
    </location>
</feature>
<feature type="compositionally biased region" description="Polar residues" evidence="3">
    <location>
        <begin position="491"/>
        <end position="502"/>
    </location>
</feature>
<feature type="compositionally biased region" description="Basic and acidic residues" evidence="3">
    <location>
        <begin position="589"/>
        <end position="603"/>
    </location>
</feature>
<feature type="active site" evidence="1">
    <location>
        <position position="190"/>
    </location>
</feature>
<feature type="active site" evidence="1">
    <location>
        <position position="389"/>
    </location>
</feature>
<feature type="active site" evidence="1">
    <location>
        <position position="451"/>
    </location>
</feature>
<feature type="glycosylation site" description="N-linked (GlcNAc...) asparagine" evidence="2">
    <location>
        <position position="119"/>
    </location>
</feature>
<feature type="glycosylation site" description="N-linked (GlcNAc...) asparagine" evidence="2">
    <location>
        <position position="440"/>
    </location>
</feature>
<feature type="glycosylation site" description="N-linked (GlcNAc...) asparagine" evidence="2">
    <location>
        <position position="448"/>
    </location>
</feature>
<feature type="glycosylation site" description="N-linked (GlcNAc...) asparagine" evidence="2">
    <location>
        <position position="500"/>
    </location>
</feature>